<protein>
    <recommendedName>
        <fullName evidence="1">NAD kinase</fullName>
        <ecNumber evidence="1">2.7.1.23</ecNumber>
    </recommendedName>
    <alternativeName>
        <fullName evidence="1">ATP-dependent NAD kinase</fullName>
    </alternativeName>
</protein>
<proteinExistence type="inferred from homology"/>
<reference key="1">
    <citation type="journal article" date="2007" name="PLoS Genet.">
        <title>Meningococcal genetic variation mechanisms viewed through comparative analysis of serogroup C strain FAM18.</title>
        <authorList>
            <person name="Bentley S.D."/>
            <person name="Vernikos G.S."/>
            <person name="Snyder L.A.S."/>
            <person name="Churcher C."/>
            <person name="Arrowsmith C."/>
            <person name="Chillingworth T."/>
            <person name="Cronin A."/>
            <person name="Davis P.H."/>
            <person name="Holroyd N.E."/>
            <person name="Jagels K."/>
            <person name="Maddison M."/>
            <person name="Moule S."/>
            <person name="Rabbinowitsch E."/>
            <person name="Sharp S."/>
            <person name="Unwin L."/>
            <person name="Whitehead S."/>
            <person name="Quail M.A."/>
            <person name="Achtman M."/>
            <person name="Barrell B.G."/>
            <person name="Saunders N.J."/>
            <person name="Parkhill J."/>
        </authorList>
    </citation>
    <scope>NUCLEOTIDE SEQUENCE [LARGE SCALE GENOMIC DNA]</scope>
    <source>
        <strain>ATCC 700532 / DSM 15464 / FAM18</strain>
    </source>
</reference>
<evidence type="ECO:0000255" key="1">
    <source>
        <dbReference type="HAMAP-Rule" id="MF_00361"/>
    </source>
</evidence>
<gene>
    <name evidence="1" type="primary">nadK</name>
    <name type="ordered locus">NMC0758</name>
</gene>
<keyword id="KW-0067">ATP-binding</keyword>
<keyword id="KW-0963">Cytoplasm</keyword>
<keyword id="KW-0418">Kinase</keyword>
<keyword id="KW-0520">NAD</keyword>
<keyword id="KW-0521">NADP</keyword>
<keyword id="KW-0547">Nucleotide-binding</keyword>
<keyword id="KW-0808">Transferase</keyword>
<organism>
    <name type="scientific">Neisseria meningitidis serogroup C / serotype 2a (strain ATCC 700532 / DSM 15464 / FAM18)</name>
    <dbReference type="NCBI Taxonomy" id="272831"/>
    <lineage>
        <taxon>Bacteria</taxon>
        <taxon>Pseudomonadati</taxon>
        <taxon>Pseudomonadota</taxon>
        <taxon>Betaproteobacteria</taxon>
        <taxon>Neisseriales</taxon>
        <taxon>Neisseriaceae</taxon>
        <taxon>Neisseria</taxon>
    </lineage>
</organism>
<accession>A1KT64</accession>
<comment type="function">
    <text evidence="1">Involved in the regulation of the intracellular balance of NAD and NADP, and is a key enzyme in the biosynthesis of NADP. Catalyzes specifically the phosphorylation on 2'-hydroxyl of the adenosine moiety of NAD to yield NADP.</text>
</comment>
<comment type="catalytic activity">
    <reaction evidence="1">
        <text>NAD(+) + ATP = ADP + NADP(+) + H(+)</text>
        <dbReference type="Rhea" id="RHEA:18629"/>
        <dbReference type="ChEBI" id="CHEBI:15378"/>
        <dbReference type="ChEBI" id="CHEBI:30616"/>
        <dbReference type="ChEBI" id="CHEBI:57540"/>
        <dbReference type="ChEBI" id="CHEBI:58349"/>
        <dbReference type="ChEBI" id="CHEBI:456216"/>
        <dbReference type="EC" id="2.7.1.23"/>
    </reaction>
</comment>
<comment type="cofactor">
    <cofactor evidence="1">
        <name>a divalent metal cation</name>
        <dbReference type="ChEBI" id="CHEBI:60240"/>
    </cofactor>
</comment>
<comment type="subcellular location">
    <subcellularLocation>
        <location evidence="1">Cytoplasm</location>
    </subcellularLocation>
</comment>
<comment type="similarity">
    <text evidence="1">Belongs to the NAD kinase family.</text>
</comment>
<feature type="chain" id="PRO_1000005424" description="NAD kinase">
    <location>
        <begin position="1"/>
        <end position="296"/>
    </location>
</feature>
<feature type="active site" description="Proton acceptor" evidence="1">
    <location>
        <position position="78"/>
    </location>
</feature>
<feature type="binding site" evidence="1">
    <location>
        <begin position="78"/>
        <end position="79"/>
    </location>
    <ligand>
        <name>NAD(+)</name>
        <dbReference type="ChEBI" id="CHEBI:57540"/>
    </ligand>
</feature>
<feature type="binding site" evidence="1">
    <location>
        <begin position="152"/>
        <end position="153"/>
    </location>
    <ligand>
        <name>NAD(+)</name>
        <dbReference type="ChEBI" id="CHEBI:57540"/>
    </ligand>
</feature>
<feature type="binding site" evidence="1">
    <location>
        <position position="180"/>
    </location>
    <ligand>
        <name>NAD(+)</name>
        <dbReference type="ChEBI" id="CHEBI:57540"/>
    </ligand>
</feature>
<feature type="binding site" evidence="1">
    <location>
        <position position="182"/>
    </location>
    <ligand>
        <name>NAD(+)</name>
        <dbReference type="ChEBI" id="CHEBI:57540"/>
    </ligand>
</feature>
<feature type="binding site" evidence="1">
    <location>
        <position position="251"/>
    </location>
    <ligand>
        <name>NAD(+)</name>
        <dbReference type="ChEBI" id="CHEBI:57540"/>
    </ligand>
</feature>
<sequence>MNSPFHNIGIVTRPNTPDIQDTAHTLITFLKQHGFTVYLDEVGIKEGCIYTQDTVGCHIVNKTELGQYCDLVAVLGGDGTFLSVAREIALRAVPIIGINQGHLGFLTQIPREYMTDKLLPVLEGKYLAEERILIEAALIREGKTAERAIALNDAVLSRGGAGQMIEFEVFVNREFVYTQRSDGLIVSTPTGSTAYSLAAGGPIMQAGLHAFTLVPICPQSMTNRPIAIPDTSEIEILVTQGGDARVHFDGQTHIDVQNLDRITIRRYRNPLRILHPTDYQYFKTLRQKLHWGEQLV</sequence>
<dbReference type="EC" id="2.7.1.23" evidence="1"/>
<dbReference type="EMBL" id="AM421808">
    <property type="protein sequence ID" value="CAM10046.1"/>
    <property type="molecule type" value="Genomic_DNA"/>
</dbReference>
<dbReference type="RefSeq" id="WP_002213954.1">
    <property type="nucleotide sequence ID" value="NC_008767.1"/>
</dbReference>
<dbReference type="SMR" id="A1KT64"/>
<dbReference type="KEGG" id="nmc:NMC0758"/>
<dbReference type="HOGENOM" id="CLU_008831_0_1_4"/>
<dbReference type="Proteomes" id="UP000002286">
    <property type="component" value="Chromosome"/>
</dbReference>
<dbReference type="GO" id="GO:0005737">
    <property type="term" value="C:cytoplasm"/>
    <property type="evidence" value="ECO:0007669"/>
    <property type="project" value="UniProtKB-SubCell"/>
</dbReference>
<dbReference type="GO" id="GO:0005524">
    <property type="term" value="F:ATP binding"/>
    <property type="evidence" value="ECO:0007669"/>
    <property type="project" value="UniProtKB-KW"/>
</dbReference>
<dbReference type="GO" id="GO:0046872">
    <property type="term" value="F:metal ion binding"/>
    <property type="evidence" value="ECO:0007669"/>
    <property type="project" value="UniProtKB-UniRule"/>
</dbReference>
<dbReference type="GO" id="GO:0051287">
    <property type="term" value="F:NAD binding"/>
    <property type="evidence" value="ECO:0007669"/>
    <property type="project" value="UniProtKB-ARBA"/>
</dbReference>
<dbReference type="GO" id="GO:0003951">
    <property type="term" value="F:NAD+ kinase activity"/>
    <property type="evidence" value="ECO:0007669"/>
    <property type="project" value="UniProtKB-UniRule"/>
</dbReference>
<dbReference type="GO" id="GO:0019674">
    <property type="term" value="P:NAD metabolic process"/>
    <property type="evidence" value="ECO:0007669"/>
    <property type="project" value="InterPro"/>
</dbReference>
<dbReference type="GO" id="GO:0006741">
    <property type="term" value="P:NADP biosynthetic process"/>
    <property type="evidence" value="ECO:0007669"/>
    <property type="project" value="UniProtKB-UniRule"/>
</dbReference>
<dbReference type="FunFam" id="2.60.200.30:FF:000011">
    <property type="entry name" value="NAD kinase"/>
    <property type="match status" value="1"/>
</dbReference>
<dbReference type="Gene3D" id="3.40.50.10330">
    <property type="entry name" value="Probable inorganic polyphosphate/atp-NAD kinase, domain 1"/>
    <property type="match status" value="1"/>
</dbReference>
<dbReference type="Gene3D" id="2.60.200.30">
    <property type="entry name" value="Probable inorganic polyphosphate/atp-NAD kinase, domain 2"/>
    <property type="match status" value="1"/>
</dbReference>
<dbReference type="HAMAP" id="MF_00361">
    <property type="entry name" value="NAD_kinase"/>
    <property type="match status" value="1"/>
</dbReference>
<dbReference type="InterPro" id="IPR017438">
    <property type="entry name" value="ATP-NAD_kinase_N"/>
</dbReference>
<dbReference type="InterPro" id="IPR017437">
    <property type="entry name" value="ATP-NAD_kinase_PpnK-typ_C"/>
</dbReference>
<dbReference type="InterPro" id="IPR016064">
    <property type="entry name" value="NAD/diacylglycerol_kinase_sf"/>
</dbReference>
<dbReference type="InterPro" id="IPR002504">
    <property type="entry name" value="NADK"/>
</dbReference>
<dbReference type="NCBIfam" id="NF002306">
    <property type="entry name" value="PRK01231.1"/>
    <property type="match status" value="1"/>
</dbReference>
<dbReference type="NCBIfam" id="NF003391">
    <property type="entry name" value="PRK04539.1"/>
    <property type="match status" value="1"/>
</dbReference>
<dbReference type="PANTHER" id="PTHR20275">
    <property type="entry name" value="NAD KINASE"/>
    <property type="match status" value="1"/>
</dbReference>
<dbReference type="PANTHER" id="PTHR20275:SF0">
    <property type="entry name" value="NAD KINASE"/>
    <property type="match status" value="1"/>
</dbReference>
<dbReference type="Pfam" id="PF01513">
    <property type="entry name" value="NAD_kinase"/>
    <property type="match status" value="1"/>
</dbReference>
<dbReference type="Pfam" id="PF20143">
    <property type="entry name" value="NAD_kinase_C"/>
    <property type="match status" value="1"/>
</dbReference>
<dbReference type="SUPFAM" id="SSF111331">
    <property type="entry name" value="NAD kinase/diacylglycerol kinase-like"/>
    <property type="match status" value="1"/>
</dbReference>
<name>NADK_NEIMF</name>